<protein>
    <recommendedName>
        <fullName evidence="6">Dermonecrotic toxin LhSicTox-alphaIA2bii</fullName>
        <ecNumber evidence="4">4.6.1.-</ecNumber>
    </recommendedName>
    <alternativeName>
        <fullName>Phospholipase D</fullName>
        <shortName>PLD</shortName>
    </alternativeName>
    <alternativeName>
        <fullName>Sphingomyelin phosphodiesterase D</fullName>
        <shortName>SMD</shortName>
        <shortName>SMase D</shortName>
        <shortName>Sphingomyelinase D</shortName>
    </alternativeName>
</protein>
<comment type="function">
    <text evidence="1 3">Dermonecrotic toxins cleave the phosphodiester linkage between the phosphate and headgroup of certain phospholipids (sphingolipid and lysolipid substrates), forming an alcohol (often choline) and a cyclic phosphate (By similarity). This toxin acts on sphingomyelin (SM) (By similarity). It may also act on ceramide phosphoethanolamine (CPE), lysophosphatidylcholine (LPC) and lysophosphatidylethanolamine (LPE), but not on lysophosphatidylserine (LPS), and lysophosphatidylglycerol (LPG) (By similarity). It acts by transphosphatidylation, releasing exclusively cyclic phosphate products as second products (By similarity). Induces dermonecrosis, hemolysis, increased vascular permeability, edema, inflammatory response, and platelet aggregation (By similarity).</text>
</comment>
<comment type="catalytic activity">
    <reaction evidence="1">
        <text>an N-(acyl)-sphingosylphosphocholine = an N-(acyl)-sphingosyl-1,3-cyclic phosphate + choline</text>
        <dbReference type="Rhea" id="RHEA:60652"/>
        <dbReference type="ChEBI" id="CHEBI:15354"/>
        <dbReference type="ChEBI" id="CHEBI:64583"/>
        <dbReference type="ChEBI" id="CHEBI:143892"/>
    </reaction>
</comment>
<comment type="catalytic activity">
    <reaction evidence="1">
        <text>an N-(acyl)-sphingosylphosphoethanolamine = an N-(acyl)-sphingosyl-1,3-cyclic phosphate + ethanolamine</text>
        <dbReference type="Rhea" id="RHEA:60648"/>
        <dbReference type="ChEBI" id="CHEBI:57603"/>
        <dbReference type="ChEBI" id="CHEBI:143891"/>
        <dbReference type="ChEBI" id="CHEBI:143892"/>
    </reaction>
</comment>
<comment type="catalytic activity">
    <reaction evidence="1">
        <text>a 1-acyl-sn-glycero-3-phosphocholine = a 1-acyl-sn-glycero-2,3-cyclic phosphate + choline</text>
        <dbReference type="Rhea" id="RHEA:60700"/>
        <dbReference type="ChEBI" id="CHEBI:15354"/>
        <dbReference type="ChEBI" id="CHEBI:58168"/>
        <dbReference type="ChEBI" id="CHEBI:143947"/>
    </reaction>
</comment>
<comment type="catalytic activity">
    <reaction evidence="1">
        <text>a 1-acyl-sn-glycero-3-phosphoethanolamine = a 1-acyl-sn-glycero-2,3-cyclic phosphate + ethanolamine</text>
        <dbReference type="Rhea" id="RHEA:60704"/>
        <dbReference type="ChEBI" id="CHEBI:57603"/>
        <dbReference type="ChEBI" id="CHEBI:64381"/>
        <dbReference type="ChEBI" id="CHEBI:143947"/>
    </reaction>
</comment>
<comment type="cofactor">
    <cofactor evidence="5">
        <name>Mg(2+)</name>
        <dbReference type="ChEBI" id="CHEBI:18420"/>
    </cofactor>
    <text evidence="5">Binds 1 Mg(2+) ion per subunit.</text>
</comment>
<comment type="subcellular location">
    <subcellularLocation>
        <location evidence="8">Secreted</location>
    </subcellularLocation>
</comment>
<comment type="tissue specificity">
    <text evidence="8">Expressed by the venom gland.</text>
</comment>
<comment type="similarity">
    <text evidence="7">Belongs to the arthropod phospholipase D family. Class II subfamily.</text>
</comment>
<comment type="caution">
    <text evidence="1 2 4">The most common activity assay for dermonecrotic toxins detects enzymatic activity by monitoring choline release from substrate. Liberation of choline from sphingomyelin (SM) or lysophosphatidylcholine (LPC) is commonly assumed to result from substrate hydrolysis, giving either ceramide-1-phosphate (C1P) or lysophosphatidic acid (LPA), respectively, as a second product. However, two studies from Lajoie and colleagues (2013 and 2015) report the observation of exclusive formation of cyclic phosphate products as second products, resulting from intramolecular transphosphatidylation. Cyclic phosphates have vastly different biological properties from their monoester counterparts, and they may be relevant to the pathology of brown spider envenomation.</text>
</comment>
<evidence type="ECO:0000250" key="1">
    <source>
        <dbReference type="UniProtKB" id="A0A0D4WTV1"/>
    </source>
</evidence>
<evidence type="ECO:0000250" key="2">
    <source>
        <dbReference type="UniProtKB" id="A0A0D4WV12"/>
    </source>
</evidence>
<evidence type="ECO:0000250" key="3">
    <source>
        <dbReference type="UniProtKB" id="P0CE80"/>
    </source>
</evidence>
<evidence type="ECO:0000250" key="4">
    <source>
        <dbReference type="UniProtKB" id="Q4ZFU2"/>
    </source>
</evidence>
<evidence type="ECO:0000250" key="5">
    <source>
        <dbReference type="UniProtKB" id="Q8I914"/>
    </source>
</evidence>
<evidence type="ECO:0000303" key="6">
    <source>
    </source>
</evidence>
<evidence type="ECO:0000305" key="7"/>
<evidence type="ECO:0000305" key="8">
    <source>
    </source>
</evidence>
<sequence>WIMGHMVNAIYQIDEFVNLGANSIETDVSFDDNANPEYTYHGIPCDCGRSCLKWENYNDFLKGLRSATTPGNSKYQSKLILVVFDLKTGSLYDNQASEAGKKLAKNLLKHYWNNGNNGGRAYIVLSIPDLNHYPLIKGFTDTLKQEGHPELLEKVGYDFSGNDAIGDVVKAYKKAGVSGHVWQSDGITNCLLRGLSRVKDAVANRDSGKGYINKVYYWTVDKRATTRDALDAGVDGVMTNYPDVIADVMNEAAYKNKVRLATYEDSPWVTFKK</sequence>
<name>A1IB2_LOXHI</name>
<reference key="1">
    <citation type="journal article" date="2009" name="Mol. Biol. Evol.">
        <title>Molecular evolution, functional variation, and proposed nomenclature of the gene family that includes sphingomyelinase D in sicariid spider venoms.</title>
        <authorList>
            <person name="Binford G.J."/>
            <person name="Bodner M.R."/>
            <person name="Cordes M.H."/>
            <person name="Baldwin K.L."/>
            <person name="Rynerson M.R."/>
            <person name="Burns S.N."/>
            <person name="Zobel-Thropp P.A."/>
        </authorList>
    </citation>
    <scope>NUCLEOTIDE SEQUENCE [MRNA]</scope>
    <scope>NOMENCLATURE</scope>
    <source>
        <tissue>Venom gland</tissue>
    </source>
</reference>
<keyword id="KW-0204">Cytolysis</keyword>
<keyword id="KW-1061">Dermonecrotic toxin</keyword>
<keyword id="KW-1015">Disulfide bond</keyword>
<keyword id="KW-0354">Hemolysis</keyword>
<keyword id="KW-0442">Lipid degradation</keyword>
<keyword id="KW-0443">Lipid metabolism</keyword>
<keyword id="KW-0456">Lyase</keyword>
<keyword id="KW-0460">Magnesium</keyword>
<keyword id="KW-0479">Metal-binding</keyword>
<keyword id="KW-0964">Secreted</keyword>
<keyword id="KW-0800">Toxin</keyword>
<feature type="chain" id="PRO_0000392758" description="Dermonecrotic toxin LhSicTox-alphaIA2bii">
    <location>
        <begin position="1" status="less than"/>
        <end position="273"/>
    </location>
</feature>
<feature type="active site" evidence="5">
    <location>
        <position position="5"/>
    </location>
</feature>
<feature type="active site" description="Nucleophile" evidence="5">
    <location>
        <position position="41"/>
    </location>
</feature>
<feature type="binding site" evidence="5">
    <location>
        <position position="25"/>
    </location>
    <ligand>
        <name>Mg(2+)</name>
        <dbReference type="ChEBI" id="CHEBI:18420"/>
    </ligand>
</feature>
<feature type="binding site" evidence="5">
    <location>
        <position position="27"/>
    </location>
    <ligand>
        <name>Mg(2+)</name>
        <dbReference type="ChEBI" id="CHEBI:18420"/>
    </ligand>
</feature>
<feature type="binding site" evidence="5">
    <location>
        <position position="85"/>
    </location>
    <ligand>
        <name>Mg(2+)</name>
        <dbReference type="ChEBI" id="CHEBI:18420"/>
    </ligand>
</feature>
<feature type="disulfide bond" evidence="3">
    <location>
        <begin position="45"/>
        <end position="51"/>
    </location>
</feature>
<feature type="disulfide bond" evidence="3">
    <location>
        <begin position="47"/>
        <end position="190"/>
    </location>
</feature>
<feature type="non-terminal residue">
    <location>
        <position position="1"/>
    </location>
</feature>
<organism>
    <name type="scientific">Loxosceles hirsuta</name>
    <name type="common">Recluse spider</name>
    <dbReference type="NCBI Taxonomy" id="571525"/>
    <lineage>
        <taxon>Eukaryota</taxon>
        <taxon>Metazoa</taxon>
        <taxon>Ecdysozoa</taxon>
        <taxon>Arthropoda</taxon>
        <taxon>Chelicerata</taxon>
        <taxon>Arachnida</taxon>
        <taxon>Araneae</taxon>
        <taxon>Araneomorphae</taxon>
        <taxon>Haplogynae</taxon>
        <taxon>Scytodoidea</taxon>
        <taxon>Sicariidae</taxon>
        <taxon>Loxosceles</taxon>
    </lineage>
</organism>
<accession>C0JAS0</accession>
<dbReference type="EC" id="4.6.1.-" evidence="4"/>
<dbReference type="EMBL" id="FJ171355">
    <property type="protein sequence ID" value="ACN48851.1"/>
    <property type="molecule type" value="mRNA"/>
</dbReference>
<dbReference type="SMR" id="C0JAS0"/>
<dbReference type="GO" id="GO:0005576">
    <property type="term" value="C:extracellular region"/>
    <property type="evidence" value="ECO:0007669"/>
    <property type="project" value="UniProtKB-SubCell"/>
</dbReference>
<dbReference type="GO" id="GO:0016829">
    <property type="term" value="F:lyase activity"/>
    <property type="evidence" value="ECO:0007669"/>
    <property type="project" value="UniProtKB-KW"/>
</dbReference>
<dbReference type="GO" id="GO:0046872">
    <property type="term" value="F:metal ion binding"/>
    <property type="evidence" value="ECO:0007669"/>
    <property type="project" value="UniProtKB-KW"/>
</dbReference>
<dbReference type="GO" id="GO:0008081">
    <property type="term" value="F:phosphoric diester hydrolase activity"/>
    <property type="evidence" value="ECO:0007669"/>
    <property type="project" value="InterPro"/>
</dbReference>
<dbReference type="GO" id="GO:0090729">
    <property type="term" value="F:toxin activity"/>
    <property type="evidence" value="ECO:0007669"/>
    <property type="project" value="UniProtKB-KW"/>
</dbReference>
<dbReference type="GO" id="GO:0031640">
    <property type="term" value="P:killing of cells of another organism"/>
    <property type="evidence" value="ECO:0007669"/>
    <property type="project" value="UniProtKB-KW"/>
</dbReference>
<dbReference type="GO" id="GO:0016042">
    <property type="term" value="P:lipid catabolic process"/>
    <property type="evidence" value="ECO:0007669"/>
    <property type="project" value="UniProtKB-KW"/>
</dbReference>
<dbReference type="CDD" id="cd08576">
    <property type="entry name" value="GDPD_like_SMaseD_PLD"/>
    <property type="match status" value="1"/>
</dbReference>
<dbReference type="Gene3D" id="3.20.20.190">
    <property type="entry name" value="Phosphatidylinositol (PI) phosphodiesterase"/>
    <property type="match status" value="1"/>
</dbReference>
<dbReference type="InterPro" id="IPR017946">
    <property type="entry name" value="PLC-like_Pdiesterase_TIM-brl"/>
</dbReference>
<dbReference type="Pfam" id="PF13653">
    <property type="entry name" value="GDPD_2"/>
    <property type="match status" value="1"/>
</dbReference>
<dbReference type="SUPFAM" id="SSF51695">
    <property type="entry name" value="PLC-like phosphodiesterases"/>
    <property type="match status" value="1"/>
</dbReference>
<proteinExistence type="evidence at transcript level"/>